<accession>Q30SM1</accession>
<protein>
    <recommendedName>
        <fullName evidence="1">Indole-3-glycerol phosphate synthase</fullName>
        <shortName evidence="1">IGPS</shortName>
        <ecNumber evidence="1">4.1.1.48</ecNumber>
    </recommendedName>
</protein>
<sequence>MILDEIIKKTREDIIKRESEFSLDWLGRSLAFNSRAPRDVFSYLSATPEDPYRVIAEVKKASPSRGVIRENFDPIAIAQSYEIGGASAISILTEPHFFQGNLDYLAQIRRYVSIPLLRKDFIVTKYQILEALVHGADFILLIAAALSKAELKELLGYTRHLGMEALVEVHDKSDLVKAIYAGSDIIGINHRNLQTFEMNMNLSYELIPLIPNGKIIVAESGIYEHGQLEDLSKAGVDAFLVGESLMREDDEEAALKKLKFGSN</sequence>
<proteinExistence type="inferred from homology"/>
<comment type="catalytic activity">
    <reaction evidence="1">
        <text>1-(2-carboxyphenylamino)-1-deoxy-D-ribulose 5-phosphate + H(+) = (1S,2R)-1-C-(indol-3-yl)glycerol 3-phosphate + CO2 + H2O</text>
        <dbReference type="Rhea" id="RHEA:23476"/>
        <dbReference type="ChEBI" id="CHEBI:15377"/>
        <dbReference type="ChEBI" id="CHEBI:15378"/>
        <dbReference type="ChEBI" id="CHEBI:16526"/>
        <dbReference type="ChEBI" id="CHEBI:58613"/>
        <dbReference type="ChEBI" id="CHEBI:58866"/>
        <dbReference type="EC" id="4.1.1.48"/>
    </reaction>
</comment>
<comment type="pathway">
    <text evidence="1">Amino-acid biosynthesis; L-tryptophan biosynthesis; L-tryptophan from chorismate: step 4/5.</text>
</comment>
<comment type="similarity">
    <text evidence="1">Belongs to the TrpC family.</text>
</comment>
<evidence type="ECO:0000255" key="1">
    <source>
        <dbReference type="HAMAP-Rule" id="MF_00134"/>
    </source>
</evidence>
<dbReference type="EC" id="4.1.1.48" evidence="1"/>
<dbReference type="EMBL" id="CP000153">
    <property type="protein sequence ID" value="ABB44010.1"/>
    <property type="molecule type" value="Genomic_DNA"/>
</dbReference>
<dbReference type="RefSeq" id="WP_011372364.1">
    <property type="nucleotide sequence ID" value="NC_007575.1"/>
</dbReference>
<dbReference type="SMR" id="Q30SM1"/>
<dbReference type="STRING" id="326298.Suden_0731"/>
<dbReference type="KEGG" id="tdn:Suden_0731"/>
<dbReference type="eggNOG" id="COG0134">
    <property type="taxonomic scope" value="Bacteria"/>
</dbReference>
<dbReference type="HOGENOM" id="CLU_034247_2_0_7"/>
<dbReference type="OrthoDB" id="9804217at2"/>
<dbReference type="UniPathway" id="UPA00035">
    <property type="reaction ID" value="UER00043"/>
</dbReference>
<dbReference type="Proteomes" id="UP000002714">
    <property type="component" value="Chromosome"/>
</dbReference>
<dbReference type="GO" id="GO:0004425">
    <property type="term" value="F:indole-3-glycerol-phosphate synthase activity"/>
    <property type="evidence" value="ECO:0007669"/>
    <property type="project" value="UniProtKB-UniRule"/>
</dbReference>
<dbReference type="GO" id="GO:0004640">
    <property type="term" value="F:phosphoribosylanthranilate isomerase activity"/>
    <property type="evidence" value="ECO:0007669"/>
    <property type="project" value="TreeGrafter"/>
</dbReference>
<dbReference type="GO" id="GO:0000162">
    <property type="term" value="P:L-tryptophan biosynthetic process"/>
    <property type="evidence" value="ECO:0007669"/>
    <property type="project" value="UniProtKB-UniRule"/>
</dbReference>
<dbReference type="CDD" id="cd00331">
    <property type="entry name" value="IGPS"/>
    <property type="match status" value="1"/>
</dbReference>
<dbReference type="FunFam" id="3.20.20.70:FF:000024">
    <property type="entry name" value="Indole-3-glycerol phosphate synthase"/>
    <property type="match status" value="1"/>
</dbReference>
<dbReference type="Gene3D" id="3.20.20.70">
    <property type="entry name" value="Aldolase class I"/>
    <property type="match status" value="1"/>
</dbReference>
<dbReference type="HAMAP" id="MF_00134_A">
    <property type="entry name" value="IGPS_A"/>
    <property type="match status" value="1"/>
</dbReference>
<dbReference type="HAMAP" id="MF_00134_B">
    <property type="entry name" value="IGPS_B"/>
    <property type="match status" value="1"/>
</dbReference>
<dbReference type="InterPro" id="IPR013785">
    <property type="entry name" value="Aldolase_TIM"/>
</dbReference>
<dbReference type="InterPro" id="IPR045186">
    <property type="entry name" value="Indole-3-glycerol_P_synth"/>
</dbReference>
<dbReference type="InterPro" id="IPR013798">
    <property type="entry name" value="Indole-3-glycerol_P_synth_dom"/>
</dbReference>
<dbReference type="InterPro" id="IPR001468">
    <property type="entry name" value="Indole-3-GlycerolPSynthase_CS"/>
</dbReference>
<dbReference type="InterPro" id="IPR011060">
    <property type="entry name" value="RibuloseP-bd_barrel"/>
</dbReference>
<dbReference type="NCBIfam" id="NF001377">
    <property type="entry name" value="PRK00278.2-4"/>
    <property type="match status" value="1"/>
</dbReference>
<dbReference type="NCBIfam" id="NF001378">
    <property type="entry name" value="PRK00278.2-5"/>
    <property type="match status" value="1"/>
</dbReference>
<dbReference type="PANTHER" id="PTHR22854:SF2">
    <property type="entry name" value="INDOLE-3-GLYCEROL-PHOSPHATE SYNTHASE"/>
    <property type="match status" value="1"/>
</dbReference>
<dbReference type="PANTHER" id="PTHR22854">
    <property type="entry name" value="TRYPTOPHAN BIOSYNTHESIS PROTEIN"/>
    <property type="match status" value="1"/>
</dbReference>
<dbReference type="Pfam" id="PF00218">
    <property type="entry name" value="IGPS"/>
    <property type="match status" value="1"/>
</dbReference>
<dbReference type="SUPFAM" id="SSF51366">
    <property type="entry name" value="Ribulose-phoshate binding barrel"/>
    <property type="match status" value="1"/>
</dbReference>
<dbReference type="PROSITE" id="PS00614">
    <property type="entry name" value="IGPS"/>
    <property type="match status" value="1"/>
</dbReference>
<keyword id="KW-0028">Amino-acid biosynthesis</keyword>
<keyword id="KW-0057">Aromatic amino acid biosynthesis</keyword>
<keyword id="KW-0210">Decarboxylase</keyword>
<keyword id="KW-0456">Lyase</keyword>
<keyword id="KW-1185">Reference proteome</keyword>
<keyword id="KW-0822">Tryptophan biosynthesis</keyword>
<feature type="chain" id="PRO_1000018567" description="Indole-3-glycerol phosphate synthase">
    <location>
        <begin position="1"/>
        <end position="263"/>
    </location>
</feature>
<gene>
    <name evidence="1" type="primary">trpC</name>
    <name type="ordered locus">Suden_0731</name>
</gene>
<reference key="1">
    <citation type="journal article" date="2008" name="Appl. Environ. Microbiol.">
        <title>Genome of the epsilonproteobacterial chemolithoautotroph Sulfurimonas denitrificans.</title>
        <authorList>
            <person name="Sievert S.M."/>
            <person name="Scott K.M."/>
            <person name="Klotz M.G."/>
            <person name="Chain P.S.G."/>
            <person name="Hauser L.J."/>
            <person name="Hemp J."/>
            <person name="Huegler M."/>
            <person name="Land M."/>
            <person name="Lapidus A."/>
            <person name="Larimer F.W."/>
            <person name="Lucas S."/>
            <person name="Malfatti S.A."/>
            <person name="Meyer F."/>
            <person name="Paulsen I.T."/>
            <person name="Ren Q."/>
            <person name="Simon J."/>
            <person name="Bailey K."/>
            <person name="Diaz E."/>
            <person name="Fitzpatrick K.A."/>
            <person name="Glover B."/>
            <person name="Gwatney N."/>
            <person name="Korajkic A."/>
            <person name="Long A."/>
            <person name="Mobberley J.M."/>
            <person name="Pantry S.N."/>
            <person name="Pazder G."/>
            <person name="Peterson S."/>
            <person name="Quintanilla J.D."/>
            <person name="Sprinkle R."/>
            <person name="Stephens J."/>
            <person name="Thomas P."/>
            <person name="Vaughn R."/>
            <person name="Weber M.J."/>
            <person name="Wooten L.L."/>
        </authorList>
    </citation>
    <scope>NUCLEOTIDE SEQUENCE [LARGE SCALE GENOMIC DNA]</scope>
    <source>
        <strain>ATCC 33889 / DSM 1251</strain>
    </source>
</reference>
<organism>
    <name type="scientific">Sulfurimonas denitrificans (strain ATCC 33889 / DSM 1251)</name>
    <name type="common">Thiomicrospira denitrificans (strain ATCC 33889 / DSM 1251)</name>
    <dbReference type="NCBI Taxonomy" id="326298"/>
    <lineage>
        <taxon>Bacteria</taxon>
        <taxon>Pseudomonadati</taxon>
        <taxon>Campylobacterota</taxon>
        <taxon>Epsilonproteobacteria</taxon>
        <taxon>Campylobacterales</taxon>
        <taxon>Sulfurimonadaceae</taxon>
        <taxon>Sulfurimonas</taxon>
    </lineage>
</organism>
<name>TRPC_SULDN</name>